<dbReference type="EMBL" id="AB033026">
    <property type="protein sequence ID" value="BAA86514.1"/>
    <property type="status" value="ALT_INIT"/>
    <property type="molecule type" value="mRNA"/>
</dbReference>
<dbReference type="EMBL" id="AK123305">
    <property type="status" value="NOT_ANNOTATED_CDS"/>
    <property type="molecule type" value="mRNA"/>
</dbReference>
<dbReference type="EMBL" id="BC014159">
    <property type="protein sequence ID" value="AAH14159.1"/>
    <property type="molecule type" value="mRNA"/>
</dbReference>
<dbReference type="EMBL" id="BC146787">
    <property type="protein sequence ID" value="AAI46788.1"/>
    <property type="molecule type" value="mRNA"/>
</dbReference>
<dbReference type="CCDS" id="CCDS45128.1">
    <molecule id="Q9ULM0-1"/>
</dbReference>
<dbReference type="RefSeq" id="NP_065766.1">
    <molecule id="Q9ULM0-1"/>
    <property type="nucleotide sequence ID" value="NM_020715.3"/>
</dbReference>
<dbReference type="SMR" id="Q9ULM0"/>
<dbReference type="BioGRID" id="121545">
    <property type="interactions" value="16"/>
</dbReference>
<dbReference type="FunCoup" id="Q9ULM0">
    <property type="interactions" value="765"/>
</dbReference>
<dbReference type="IntAct" id="Q9ULM0">
    <property type="interactions" value="13"/>
</dbReference>
<dbReference type="MINT" id="Q9ULM0"/>
<dbReference type="STRING" id="9606.ENSP00000330278"/>
<dbReference type="GlyGen" id="Q9ULM0">
    <property type="glycosylation" value="2 sites, 1 O-linked glycan (1 site)"/>
</dbReference>
<dbReference type="iPTMnet" id="Q9ULM0"/>
<dbReference type="PhosphoSitePlus" id="Q9ULM0"/>
<dbReference type="BioMuta" id="PLEKHH1"/>
<dbReference type="DMDM" id="160418959"/>
<dbReference type="jPOST" id="Q9ULM0"/>
<dbReference type="MassIVE" id="Q9ULM0"/>
<dbReference type="PaxDb" id="9606-ENSP00000330278"/>
<dbReference type="PeptideAtlas" id="Q9ULM0"/>
<dbReference type="ProteomicsDB" id="85075">
    <molecule id="Q9ULM0-1"/>
</dbReference>
<dbReference type="ProteomicsDB" id="85076">
    <molecule id="Q9ULM0-2"/>
</dbReference>
<dbReference type="Antibodypedia" id="64198">
    <property type="antibodies" value="70 antibodies from 17 providers"/>
</dbReference>
<dbReference type="DNASU" id="57475"/>
<dbReference type="Ensembl" id="ENST00000329153.10">
    <molecule id="Q9ULM0-1"/>
    <property type="protein sequence ID" value="ENSP00000330278.5"/>
    <property type="gene ID" value="ENSG00000054690.14"/>
</dbReference>
<dbReference type="GeneID" id="57475"/>
<dbReference type="KEGG" id="hsa:57475"/>
<dbReference type="MANE-Select" id="ENST00000329153.10">
    <property type="protein sequence ID" value="ENSP00000330278.5"/>
    <property type="RefSeq nucleotide sequence ID" value="NM_020715.3"/>
    <property type="RefSeq protein sequence ID" value="NP_065766.1"/>
</dbReference>
<dbReference type="UCSC" id="uc001xjl.2">
    <molecule id="Q9ULM0-1"/>
    <property type="organism name" value="human"/>
</dbReference>
<dbReference type="AGR" id="HGNC:17733"/>
<dbReference type="CTD" id="57475"/>
<dbReference type="DisGeNET" id="57475"/>
<dbReference type="GeneCards" id="PLEKHH1"/>
<dbReference type="HGNC" id="HGNC:17733">
    <property type="gene designation" value="PLEKHH1"/>
</dbReference>
<dbReference type="HPA" id="ENSG00000054690">
    <property type="expression patterns" value="Tissue enhanced (brain, thyroid gland)"/>
</dbReference>
<dbReference type="neXtProt" id="NX_Q9ULM0"/>
<dbReference type="OpenTargets" id="ENSG00000054690"/>
<dbReference type="PharmGKB" id="PA134879998"/>
<dbReference type="VEuPathDB" id="HostDB:ENSG00000054690"/>
<dbReference type="eggNOG" id="KOG0248">
    <property type="taxonomic scope" value="Eukaryota"/>
</dbReference>
<dbReference type="GeneTree" id="ENSGT00940000159456"/>
<dbReference type="HOGENOM" id="CLU_001626_3_1_1"/>
<dbReference type="InParanoid" id="Q9ULM0"/>
<dbReference type="OMA" id="FYPIRYR"/>
<dbReference type="OrthoDB" id="6285196at2759"/>
<dbReference type="PAN-GO" id="Q9ULM0">
    <property type="GO annotations" value="0 GO annotations based on evolutionary models"/>
</dbReference>
<dbReference type="PhylomeDB" id="Q9ULM0"/>
<dbReference type="TreeFam" id="TF312866"/>
<dbReference type="PathwayCommons" id="Q9ULM0"/>
<dbReference type="SignaLink" id="Q9ULM0"/>
<dbReference type="BioGRID-ORCS" id="57475">
    <property type="hits" value="16 hits in 1155 CRISPR screens"/>
</dbReference>
<dbReference type="ChiTaRS" id="PLEKHH1">
    <property type="organism name" value="human"/>
</dbReference>
<dbReference type="GenomeRNAi" id="57475"/>
<dbReference type="Pharos" id="Q9ULM0">
    <property type="development level" value="Tdark"/>
</dbReference>
<dbReference type="PRO" id="PR:Q9ULM0"/>
<dbReference type="Proteomes" id="UP000005640">
    <property type="component" value="Chromosome 14"/>
</dbReference>
<dbReference type="RNAct" id="Q9ULM0">
    <property type="molecule type" value="protein"/>
</dbReference>
<dbReference type="Bgee" id="ENSG00000054690">
    <property type="expression patterns" value="Expressed in right lobe of thyroid gland and 172 other cell types or tissues"/>
</dbReference>
<dbReference type="ExpressionAtlas" id="Q9ULM0">
    <property type="expression patterns" value="baseline and differential"/>
</dbReference>
<dbReference type="GO" id="GO:0005856">
    <property type="term" value="C:cytoskeleton"/>
    <property type="evidence" value="ECO:0007669"/>
    <property type="project" value="InterPro"/>
</dbReference>
<dbReference type="CDD" id="cd14473">
    <property type="entry name" value="FERM_B-lobe"/>
    <property type="match status" value="1"/>
</dbReference>
<dbReference type="CDD" id="cd13206">
    <property type="entry name" value="FERM_C-lobe_PLEKHH1_PLEKHH2"/>
    <property type="match status" value="1"/>
</dbReference>
<dbReference type="CDD" id="cd13282">
    <property type="entry name" value="PH1_PLEKHH1_PLEKHH2"/>
    <property type="match status" value="1"/>
</dbReference>
<dbReference type="FunFam" id="2.30.29.30:FF:000286">
    <property type="entry name" value="PH-protein kinase domain containing protein"/>
    <property type="match status" value="1"/>
</dbReference>
<dbReference type="Gene3D" id="1.20.80.10">
    <property type="match status" value="1"/>
</dbReference>
<dbReference type="Gene3D" id="1.25.40.530">
    <property type="entry name" value="MyTH4 domain"/>
    <property type="match status" value="1"/>
</dbReference>
<dbReference type="Gene3D" id="3.10.20.90">
    <property type="entry name" value="Phosphatidylinositol 3-kinase Catalytic Subunit, Chain A, domain 1"/>
    <property type="match status" value="1"/>
</dbReference>
<dbReference type="Gene3D" id="2.30.29.30">
    <property type="entry name" value="Pleckstrin-homology domain (PH domain)/Phosphotyrosine-binding domain (PTB)"/>
    <property type="match status" value="3"/>
</dbReference>
<dbReference type="InterPro" id="IPR019749">
    <property type="entry name" value="Band_41_domain"/>
</dbReference>
<dbReference type="InterPro" id="IPR014352">
    <property type="entry name" value="FERM/acyl-CoA-bd_prot_sf"/>
</dbReference>
<dbReference type="InterPro" id="IPR035963">
    <property type="entry name" value="FERM_2"/>
</dbReference>
<dbReference type="InterPro" id="IPR019748">
    <property type="entry name" value="FERM_central"/>
</dbReference>
<dbReference type="InterPro" id="IPR000299">
    <property type="entry name" value="FERM_domain"/>
</dbReference>
<dbReference type="InterPro" id="IPR000857">
    <property type="entry name" value="MyTH4_dom"/>
</dbReference>
<dbReference type="InterPro" id="IPR038185">
    <property type="entry name" value="MyTH4_dom_sf"/>
</dbReference>
<dbReference type="InterPro" id="IPR011993">
    <property type="entry name" value="PH-like_dom_sf"/>
</dbReference>
<dbReference type="InterPro" id="IPR001849">
    <property type="entry name" value="PH_domain"/>
</dbReference>
<dbReference type="PANTHER" id="PTHR22903:SF4">
    <property type="entry name" value="PLECKSTRIN HOMOLOGY DOMAIN-CONTAINING FAMILY H MEMBER 1"/>
    <property type="match status" value="1"/>
</dbReference>
<dbReference type="PANTHER" id="PTHR22903">
    <property type="entry name" value="PLEKHH PROTEIN"/>
    <property type="match status" value="1"/>
</dbReference>
<dbReference type="Pfam" id="PF00373">
    <property type="entry name" value="FERM_M"/>
    <property type="match status" value="1"/>
</dbReference>
<dbReference type="Pfam" id="PF00784">
    <property type="entry name" value="MyTH4"/>
    <property type="match status" value="1"/>
</dbReference>
<dbReference type="Pfam" id="PF00169">
    <property type="entry name" value="PH"/>
    <property type="match status" value="1"/>
</dbReference>
<dbReference type="Pfam" id="PF21989">
    <property type="entry name" value="RA_2"/>
    <property type="match status" value="1"/>
</dbReference>
<dbReference type="SMART" id="SM00295">
    <property type="entry name" value="B41"/>
    <property type="match status" value="1"/>
</dbReference>
<dbReference type="SMART" id="SM00139">
    <property type="entry name" value="MyTH4"/>
    <property type="match status" value="1"/>
</dbReference>
<dbReference type="SMART" id="SM00233">
    <property type="entry name" value="PH"/>
    <property type="match status" value="2"/>
</dbReference>
<dbReference type="SUPFAM" id="SSF50729">
    <property type="entry name" value="PH domain-like"/>
    <property type="match status" value="2"/>
</dbReference>
<dbReference type="SUPFAM" id="SSF47031">
    <property type="entry name" value="Second domain of FERM"/>
    <property type="match status" value="1"/>
</dbReference>
<dbReference type="PROSITE" id="PS50057">
    <property type="entry name" value="FERM_3"/>
    <property type="match status" value="1"/>
</dbReference>
<dbReference type="PROSITE" id="PS51016">
    <property type="entry name" value="MYTH4"/>
    <property type="match status" value="1"/>
</dbReference>
<dbReference type="PROSITE" id="PS50003">
    <property type="entry name" value="PH_DOMAIN"/>
    <property type="match status" value="2"/>
</dbReference>
<accession>Q9ULM0</accession>
<accession>A6H8X6</accession>
<accession>Q6PJL4</accession>
<accession>Q6ZWC7</accession>
<sequence length="1364" mass="151232">MAELKVEAPASVDWQKRCLTLETQLFRFRLQASKIRELLADKMQELEQRLLEAEQRAENAETQVGVMEEKVKLSNLKNVDSEGSLHRKYQELLKAIKGKDELISQLEAQLEKQKQMRAEEAKTVQEKAAKIKEWVTLKLAKLEMENQHLKSHNQRLVEQVGSLQDALEAIQIAPSRKLLVPPYGAAEQDSVPSEPGIQPMGQDSGSQAQGLKAAVLAPSPGALQSKDSVSEAASPLEDSSSSTVHSGETVEAKPLQPHLGRESPPHQPCMKLLTFRCSSASWGEGLVTAQRGMLPGTKTSAREGGPGSSLTLPKVRAPGTPRDSIQLAKRHHSQPQVGHGHFGRVVNIETEAFSALHPSGLPELESRARSREEPEKMEMEEPPPAGKNEERESPKALGAELEEVELGNKPPTPPLHQFSSWESRIYAVATSGMRLSDMSPRSNTACCASSPPALVSPGSFSGLVYKNVTVPVYTALKGRATQISNMPFMDESSGSDDDCSSQASFRISVPSSESRKTSGLGSPRAIKRGVSMSSLSSEGDYAIPPDACSLDSDYSEPEHKLQRTSSYSTDGLGLGGESLEKSGYLLKMGSQVKTWKRRWFVLRQGQIMYYKSPSDVIRKPQGQVDLNSRCQIVRGEGSQTFQLISEKKTYYLTADSPSLLEEWIRVLQSLLKVQATGPPALLRGGTKPTVKGWLTKVKHGHSKVVWCALVGKIFYYYRSHEDKRPLGCLPVRDAHIEEVDRSCDSDEDYEAGGTRRLLSSHCTLVIHPTEHSPTYLLIGTKHEKDTWLYHLTVAAGGSSAKVGTAYEQLIGKLMDGEGDPDSPLWRHPMLCYSKDGLYASLTTLPSEALQTEALKLFKSCQLFINVPVEAASVDYHVSLAQTALQVCLVHPELQSEIYCQLMKQTSCRPPQKYSLMQCWQLLALCAPLFLPQHHFLWYVKQQLQRHADPRSETGQYATYCQRAVERTLRTGEREARPSRMEVVSILLRNPFHHSLPFSIPVHFTNGTYHVVGFDGSSTVDEFLQRLNQEIGMRKPSHSGFALFTDDPSGRDLEHCLQGSVKICDAISKWEQAMKELHPGKSEGGTRVVKLMYKNRLYFRSQVKGETDRERLLLASQTSREIVAGRFPINKELALEMAALMAQVEYGDLEKPALPGPGGTSPAKAQHLLQQVLDRFHPRRYRHGAPAEQLRHLADMLTTKWATLQGCSPPECIRIYLTVARKWPFFGAKLFAAQPAQLSSKENALVWIAVNEDGVSILDHNTMQVHITYPYSSVTTFGGCRDDFMLVIRSIPDKSSGKSHIEKLIFRMAAPKIAEATFIMASYMNHCTTTVNPPTNPPGACQLWELDGRQFFSSVSCATKGPTLL</sequence>
<evidence type="ECO:0000250" key="1">
    <source>
        <dbReference type="UniProtKB" id="Q80TI1"/>
    </source>
</evidence>
<evidence type="ECO:0000255" key="2"/>
<evidence type="ECO:0000255" key="3">
    <source>
        <dbReference type="PROSITE-ProRule" id="PRU00084"/>
    </source>
</evidence>
<evidence type="ECO:0000255" key="4">
    <source>
        <dbReference type="PROSITE-ProRule" id="PRU00145"/>
    </source>
</evidence>
<evidence type="ECO:0000255" key="5">
    <source>
        <dbReference type="PROSITE-ProRule" id="PRU00359"/>
    </source>
</evidence>
<evidence type="ECO:0000256" key="6">
    <source>
        <dbReference type="SAM" id="MobiDB-lite"/>
    </source>
</evidence>
<evidence type="ECO:0000303" key="7">
    <source>
    </source>
</evidence>
<evidence type="ECO:0000305" key="8"/>
<gene>
    <name type="primary">PLEKHH1</name>
    <name type="synonym">KIAA1200</name>
</gene>
<protein>
    <recommendedName>
        <fullName>Pleckstrin homology domain-containing family H member 1</fullName>
        <shortName>PH domain-containing family H member 1</shortName>
    </recommendedName>
</protein>
<proteinExistence type="evidence at protein level"/>
<feature type="chain" id="PRO_0000310948" description="Pleckstrin homology domain-containing family H member 1">
    <location>
        <begin position="1"/>
        <end position="1364"/>
    </location>
</feature>
<feature type="domain" description="PH 1" evidence="4">
    <location>
        <begin position="578"/>
        <end position="672"/>
    </location>
</feature>
<feature type="domain" description="PH 2" evidence="4">
    <location>
        <begin position="687"/>
        <end position="796"/>
    </location>
</feature>
<feature type="domain" description="MyTH4" evidence="5">
    <location>
        <begin position="832"/>
        <end position="986"/>
    </location>
</feature>
<feature type="domain" description="FERM" evidence="3">
    <location>
        <begin position="997"/>
        <end position="1333"/>
    </location>
</feature>
<feature type="region of interest" description="Disordered" evidence="6">
    <location>
        <begin position="184"/>
        <end position="266"/>
    </location>
</feature>
<feature type="region of interest" description="Disordered" evidence="6">
    <location>
        <begin position="296"/>
        <end position="321"/>
    </location>
</feature>
<feature type="region of interest" description="Disordered" evidence="6">
    <location>
        <begin position="356"/>
        <end position="395"/>
    </location>
</feature>
<feature type="region of interest" description="Disordered" evidence="6">
    <location>
        <begin position="487"/>
        <end position="529"/>
    </location>
</feature>
<feature type="region of interest" description="Disordered" evidence="6">
    <location>
        <begin position="546"/>
        <end position="568"/>
    </location>
</feature>
<feature type="coiled-coil region" evidence="2">
    <location>
        <begin position="28"/>
        <end position="169"/>
    </location>
</feature>
<feature type="compositionally biased region" description="Polar residues" evidence="6">
    <location>
        <begin position="237"/>
        <end position="246"/>
    </location>
</feature>
<feature type="compositionally biased region" description="Basic and acidic residues" evidence="6">
    <location>
        <begin position="364"/>
        <end position="379"/>
    </location>
</feature>
<feature type="compositionally biased region" description="Polar residues" evidence="6">
    <location>
        <begin position="509"/>
        <end position="520"/>
    </location>
</feature>
<feature type="modified residue" description="Phosphoserine" evidence="1">
    <location>
        <position position="745"/>
    </location>
</feature>
<feature type="splice variant" id="VSP_029347" description="In isoform 2." evidence="7">
    <location>
        <begin position="1"/>
        <end position="485"/>
    </location>
</feature>
<feature type="splice variant" id="VSP_029348" description="In isoform 2." evidence="7">
    <original>RPLGCLPVRDAHIEEVDRSCDSDEDYEAGGT</original>
    <variation>VLLSLLTIPTLLLPPKHMTATLCPDESPYPT</variation>
    <location>
        <begin position="724"/>
        <end position="754"/>
    </location>
</feature>
<feature type="splice variant" id="VSP_029349" description="In isoform 2." evidence="7">
    <location>
        <begin position="755"/>
        <end position="1364"/>
    </location>
</feature>
<feature type="sequence variant" id="VAR_037094" description="In dbSNP:rs7150973.">
    <original>N</original>
    <variation>S</variation>
    <location>
        <position position="75"/>
    </location>
</feature>
<feature type="sequence variant" id="VAR_037095" description="In dbSNP:rs3825723.">
    <original>Q</original>
    <variation>L</variation>
    <location>
        <position position="113"/>
    </location>
</feature>
<feature type="sequence variant" id="VAR_037096" description="In dbSNP:rs2236235.">
    <original>R</original>
    <variation>Q</variation>
    <location>
        <position position="322"/>
    </location>
</feature>
<feature type="sequence variant" id="VAR_037097" description="In dbSNP:rs3825725.">
    <original>T</original>
    <variation>A</variation>
    <location>
        <position position="430"/>
    </location>
</feature>
<feature type="sequence variant" id="VAR_037098" description="In dbSNP:rs17104428.">
    <original>M</original>
    <variation>V</variation>
    <location>
        <position position="438"/>
    </location>
</feature>
<feature type="sequence variant" id="VAR_037099" description="In dbSNP:rs11158685.">
    <original>H</original>
    <variation>R</variation>
    <location>
        <position position="735"/>
    </location>
</feature>
<name>PKHH1_HUMAN</name>
<organism>
    <name type="scientific">Homo sapiens</name>
    <name type="common">Human</name>
    <dbReference type="NCBI Taxonomy" id="9606"/>
    <lineage>
        <taxon>Eukaryota</taxon>
        <taxon>Metazoa</taxon>
        <taxon>Chordata</taxon>
        <taxon>Craniata</taxon>
        <taxon>Vertebrata</taxon>
        <taxon>Euteleostomi</taxon>
        <taxon>Mammalia</taxon>
        <taxon>Eutheria</taxon>
        <taxon>Euarchontoglires</taxon>
        <taxon>Primates</taxon>
        <taxon>Haplorrhini</taxon>
        <taxon>Catarrhini</taxon>
        <taxon>Hominidae</taxon>
        <taxon>Homo</taxon>
    </lineage>
</organism>
<reference key="1">
    <citation type="journal article" date="1999" name="DNA Res.">
        <title>Prediction of the coding sequences of unidentified human genes. XV. The complete sequences of 100 new cDNA clones from brain which code for large proteins in vitro.</title>
        <authorList>
            <person name="Nagase T."/>
            <person name="Ishikawa K."/>
            <person name="Kikuno R."/>
            <person name="Hirosawa M."/>
            <person name="Nomura N."/>
            <person name="Ohara O."/>
        </authorList>
    </citation>
    <scope>NUCLEOTIDE SEQUENCE [LARGE SCALE MRNA] (ISOFORM 1)</scope>
    <source>
        <tissue>Brain</tissue>
    </source>
</reference>
<reference key="2">
    <citation type="journal article" date="2004" name="Nat. Genet.">
        <title>Complete sequencing and characterization of 21,243 full-length human cDNAs.</title>
        <authorList>
            <person name="Ota T."/>
            <person name="Suzuki Y."/>
            <person name="Nishikawa T."/>
            <person name="Otsuki T."/>
            <person name="Sugiyama T."/>
            <person name="Irie R."/>
            <person name="Wakamatsu A."/>
            <person name="Hayashi K."/>
            <person name="Sato H."/>
            <person name="Nagai K."/>
            <person name="Kimura K."/>
            <person name="Makita H."/>
            <person name="Sekine M."/>
            <person name="Obayashi M."/>
            <person name="Nishi T."/>
            <person name="Shibahara T."/>
            <person name="Tanaka T."/>
            <person name="Ishii S."/>
            <person name="Yamamoto J."/>
            <person name="Saito K."/>
            <person name="Kawai Y."/>
            <person name="Isono Y."/>
            <person name="Nakamura Y."/>
            <person name="Nagahari K."/>
            <person name="Murakami K."/>
            <person name="Yasuda T."/>
            <person name="Iwayanagi T."/>
            <person name="Wagatsuma M."/>
            <person name="Shiratori A."/>
            <person name="Sudo H."/>
            <person name="Hosoiri T."/>
            <person name="Kaku Y."/>
            <person name="Kodaira H."/>
            <person name="Kondo H."/>
            <person name="Sugawara M."/>
            <person name="Takahashi M."/>
            <person name="Kanda K."/>
            <person name="Yokoi T."/>
            <person name="Furuya T."/>
            <person name="Kikkawa E."/>
            <person name="Omura Y."/>
            <person name="Abe K."/>
            <person name="Kamihara K."/>
            <person name="Katsuta N."/>
            <person name="Sato K."/>
            <person name="Tanikawa M."/>
            <person name="Yamazaki M."/>
            <person name="Ninomiya K."/>
            <person name="Ishibashi T."/>
            <person name="Yamashita H."/>
            <person name="Murakawa K."/>
            <person name="Fujimori K."/>
            <person name="Tanai H."/>
            <person name="Kimata M."/>
            <person name="Watanabe M."/>
            <person name="Hiraoka S."/>
            <person name="Chiba Y."/>
            <person name="Ishida S."/>
            <person name="Ono Y."/>
            <person name="Takiguchi S."/>
            <person name="Watanabe S."/>
            <person name="Yosida M."/>
            <person name="Hotuta T."/>
            <person name="Kusano J."/>
            <person name="Kanehori K."/>
            <person name="Takahashi-Fujii A."/>
            <person name="Hara H."/>
            <person name="Tanase T.-O."/>
            <person name="Nomura Y."/>
            <person name="Togiya S."/>
            <person name="Komai F."/>
            <person name="Hara R."/>
            <person name="Takeuchi K."/>
            <person name="Arita M."/>
            <person name="Imose N."/>
            <person name="Musashino K."/>
            <person name="Yuuki H."/>
            <person name="Oshima A."/>
            <person name="Sasaki N."/>
            <person name="Aotsuka S."/>
            <person name="Yoshikawa Y."/>
            <person name="Matsunawa H."/>
            <person name="Ichihara T."/>
            <person name="Shiohata N."/>
            <person name="Sano S."/>
            <person name="Moriya S."/>
            <person name="Momiyama H."/>
            <person name="Satoh N."/>
            <person name="Takami S."/>
            <person name="Terashima Y."/>
            <person name="Suzuki O."/>
            <person name="Nakagawa S."/>
            <person name="Senoh A."/>
            <person name="Mizoguchi H."/>
            <person name="Goto Y."/>
            <person name="Shimizu F."/>
            <person name="Wakebe H."/>
            <person name="Hishigaki H."/>
            <person name="Watanabe T."/>
            <person name="Sugiyama A."/>
            <person name="Takemoto M."/>
            <person name="Kawakami B."/>
            <person name="Yamazaki M."/>
            <person name="Watanabe K."/>
            <person name="Kumagai A."/>
            <person name="Itakura S."/>
            <person name="Fukuzumi Y."/>
            <person name="Fujimori Y."/>
            <person name="Komiyama M."/>
            <person name="Tashiro H."/>
            <person name="Tanigami A."/>
            <person name="Fujiwara T."/>
            <person name="Ono T."/>
            <person name="Yamada K."/>
            <person name="Fujii Y."/>
            <person name="Ozaki K."/>
            <person name="Hirao M."/>
            <person name="Ohmori Y."/>
            <person name="Kawabata A."/>
            <person name="Hikiji T."/>
            <person name="Kobatake N."/>
            <person name="Inagaki H."/>
            <person name="Ikema Y."/>
            <person name="Okamoto S."/>
            <person name="Okitani R."/>
            <person name="Kawakami T."/>
            <person name="Noguchi S."/>
            <person name="Itoh T."/>
            <person name="Shigeta K."/>
            <person name="Senba T."/>
            <person name="Matsumura K."/>
            <person name="Nakajima Y."/>
            <person name="Mizuno T."/>
            <person name="Morinaga M."/>
            <person name="Sasaki M."/>
            <person name="Togashi T."/>
            <person name="Oyama M."/>
            <person name="Hata H."/>
            <person name="Watanabe M."/>
            <person name="Komatsu T."/>
            <person name="Mizushima-Sugano J."/>
            <person name="Satoh T."/>
            <person name="Shirai Y."/>
            <person name="Takahashi Y."/>
            <person name="Nakagawa K."/>
            <person name="Okumura K."/>
            <person name="Nagase T."/>
            <person name="Nomura N."/>
            <person name="Kikuchi H."/>
            <person name="Masuho Y."/>
            <person name="Yamashita R."/>
            <person name="Nakai K."/>
            <person name="Yada T."/>
            <person name="Nakamura Y."/>
            <person name="Ohara O."/>
            <person name="Isogai T."/>
            <person name="Sugano S."/>
        </authorList>
    </citation>
    <scope>NUCLEOTIDE SEQUENCE [LARGE SCALE MRNA] (ISOFORM 2)</scope>
    <source>
        <tissue>Amygdala</tissue>
    </source>
</reference>
<reference key="3">
    <citation type="journal article" date="2004" name="Genome Res.">
        <title>The status, quality, and expansion of the NIH full-length cDNA project: the Mammalian Gene Collection (MGC).</title>
        <authorList>
            <consortium name="The MGC Project Team"/>
        </authorList>
    </citation>
    <scope>NUCLEOTIDE SEQUENCE [LARGE SCALE MRNA] (ISOFORM 1)</scope>
    <source>
        <tissue>Placenta</tissue>
    </source>
</reference>
<keyword id="KW-0025">Alternative splicing</keyword>
<keyword id="KW-0175">Coiled coil</keyword>
<keyword id="KW-0597">Phosphoprotein</keyword>
<keyword id="KW-1267">Proteomics identification</keyword>
<keyword id="KW-1185">Reference proteome</keyword>
<keyword id="KW-0677">Repeat</keyword>
<comment type="alternative products">
    <event type="alternative splicing"/>
    <isoform>
        <id>Q9ULM0-1</id>
        <name>1</name>
        <sequence type="displayed"/>
    </isoform>
    <isoform>
        <id>Q9ULM0-2</id>
        <name>2</name>
        <sequence type="described" ref="VSP_029347 VSP_029348 VSP_029349"/>
    </isoform>
</comment>
<comment type="sequence caution" evidence="8">
    <conflict type="erroneous initiation">
        <sequence resource="EMBL-CDS" id="BAA86514"/>
    </conflict>
</comment>